<gene>
    <name evidence="1" type="primary">rplJ</name>
    <name type="ordered locus">ECH74115_5450</name>
</gene>
<keyword id="KW-0007">Acetylation</keyword>
<keyword id="KW-0687">Ribonucleoprotein</keyword>
<keyword id="KW-0689">Ribosomal protein</keyword>
<keyword id="KW-0694">RNA-binding</keyword>
<keyword id="KW-0699">rRNA-binding</keyword>
<organism>
    <name type="scientific">Escherichia coli O157:H7 (strain EC4115 / EHEC)</name>
    <dbReference type="NCBI Taxonomy" id="444450"/>
    <lineage>
        <taxon>Bacteria</taxon>
        <taxon>Pseudomonadati</taxon>
        <taxon>Pseudomonadota</taxon>
        <taxon>Gammaproteobacteria</taxon>
        <taxon>Enterobacterales</taxon>
        <taxon>Enterobacteriaceae</taxon>
        <taxon>Escherichia</taxon>
    </lineage>
</organism>
<evidence type="ECO:0000255" key="1">
    <source>
        <dbReference type="HAMAP-Rule" id="MF_00362"/>
    </source>
</evidence>
<evidence type="ECO:0000305" key="2"/>
<protein>
    <recommendedName>
        <fullName evidence="1">Large ribosomal subunit protein uL10</fullName>
    </recommendedName>
    <alternativeName>
        <fullName evidence="2">50S ribosomal protein L10</fullName>
    </alternativeName>
</protein>
<accession>B5Z081</accession>
<dbReference type="EMBL" id="CP001164">
    <property type="protein sequence ID" value="ACI39101.1"/>
    <property type="molecule type" value="Genomic_DNA"/>
</dbReference>
<dbReference type="RefSeq" id="WP_001207201.1">
    <property type="nucleotide sequence ID" value="NC_011353.1"/>
</dbReference>
<dbReference type="SMR" id="B5Z081"/>
<dbReference type="GeneID" id="93777909"/>
<dbReference type="KEGG" id="ecf:ECH74115_5450"/>
<dbReference type="HOGENOM" id="CLU_092227_0_2_6"/>
<dbReference type="GO" id="GO:0015934">
    <property type="term" value="C:large ribosomal subunit"/>
    <property type="evidence" value="ECO:0007669"/>
    <property type="project" value="InterPro"/>
</dbReference>
<dbReference type="GO" id="GO:0070180">
    <property type="term" value="F:large ribosomal subunit rRNA binding"/>
    <property type="evidence" value="ECO:0007669"/>
    <property type="project" value="UniProtKB-UniRule"/>
</dbReference>
<dbReference type="GO" id="GO:0003735">
    <property type="term" value="F:structural constituent of ribosome"/>
    <property type="evidence" value="ECO:0007669"/>
    <property type="project" value="InterPro"/>
</dbReference>
<dbReference type="GO" id="GO:0006412">
    <property type="term" value="P:translation"/>
    <property type="evidence" value="ECO:0007669"/>
    <property type="project" value="UniProtKB-UniRule"/>
</dbReference>
<dbReference type="CDD" id="cd05797">
    <property type="entry name" value="Ribosomal_L10"/>
    <property type="match status" value="1"/>
</dbReference>
<dbReference type="FunFam" id="3.30.70.1730:FF:000001">
    <property type="entry name" value="50S ribosomal protein L10"/>
    <property type="match status" value="1"/>
</dbReference>
<dbReference type="Gene3D" id="3.30.70.1730">
    <property type="match status" value="1"/>
</dbReference>
<dbReference type="Gene3D" id="6.10.250.2350">
    <property type="match status" value="1"/>
</dbReference>
<dbReference type="HAMAP" id="MF_00362">
    <property type="entry name" value="Ribosomal_uL10"/>
    <property type="match status" value="1"/>
</dbReference>
<dbReference type="InterPro" id="IPR001790">
    <property type="entry name" value="Ribosomal_uL10"/>
</dbReference>
<dbReference type="InterPro" id="IPR043141">
    <property type="entry name" value="Ribosomal_uL10-like_sf"/>
</dbReference>
<dbReference type="InterPro" id="IPR022973">
    <property type="entry name" value="Ribosomal_uL10_bac"/>
</dbReference>
<dbReference type="InterPro" id="IPR047865">
    <property type="entry name" value="Ribosomal_uL10_bac_type"/>
</dbReference>
<dbReference type="InterPro" id="IPR002363">
    <property type="entry name" value="Ribosomal_uL10_CS_bac"/>
</dbReference>
<dbReference type="NCBIfam" id="NF000955">
    <property type="entry name" value="PRK00099.1-1"/>
    <property type="match status" value="1"/>
</dbReference>
<dbReference type="PANTHER" id="PTHR11560">
    <property type="entry name" value="39S RIBOSOMAL PROTEIN L10, MITOCHONDRIAL"/>
    <property type="match status" value="1"/>
</dbReference>
<dbReference type="Pfam" id="PF00466">
    <property type="entry name" value="Ribosomal_L10"/>
    <property type="match status" value="1"/>
</dbReference>
<dbReference type="SUPFAM" id="SSF160369">
    <property type="entry name" value="Ribosomal protein L10-like"/>
    <property type="match status" value="1"/>
</dbReference>
<dbReference type="PROSITE" id="PS01109">
    <property type="entry name" value="RIBOSOMAL_L10"/>
    <property type="match status" value="1"/>
</dbReference>
<reference key="1">
    <citation type="journal article" date="2011" name="Proc. Natl. Acad. Sci. U.S.A.">
        <title>Genomic anatomy of Escherichia coli O157:H7 outbreaks.</title>
        <authorList>
            <person name="Eppinger M."/>
            <person name="Mammel M.K."/>
            <person name="Leclerc J.E."/>
            <person name="Ravel J."/>
            <person name="Cebula T.A."/>
        </authorList>
    </citation>
    <scope>NUCLEOTIDE SEQUENCE [LARGE SCALE GENOMIC DNA]</scope>
    <source>
        <strain>EC4115 / EHEC</strain>
    </source>
</reference>
<sequence>MALNLQDKQAIVAEVSEVAKGALSAVVADSRGVTVDKMTELRKAGREAGVYMRVVRNTLLRRAVEGTPFECLKDAFVGPTLIAYSMEHPGAAARLFKEFAKANAKFEVKAAAFEGELIPASQIDRLATLPTYEEAIARLMATMKEASAGKLVRTLAAVRDAKEAA</sequence>
<name>RL10_ECO5E</name>
<proteinExistence type="inferred from homology"/>
<feature type="chain" id="PRO_1000120953" description="Large ribosomal subunit protein uL10">
    <location>
        <begin position="1"/>
        <end position="165"/>
    </location>
</feature>
<feature type="modified residue" description="N6-acetyllysine" evidence="1">
    <location>
        <position position="37"/>
    </location>
</feature>
<feature type="modified residue" description="N6-acetyllysine" evidence="1">
    <location>
        <position position="105"/>
    </location>
</feature>
<comment type="function">
    <text evidence="1">Forms part of the ribosomal stalk, playing a central role in the interaction of the ribosome with GTP-bound translation factors.</text>
</comment>
<comment type="subunit">
    <text evidence="1">Part of the ribosomal stalk of the 50S ribosomal subunit. The N-terminus interacts with L11 and the large rRNA to form the base of the stalk. The C-terminus forms an elongated spine to which L12 dimers bind in a sequential fashion forming a multimeric L10(L12)X complex.</text>
</comment>
<comment type="similarity">
    <text evidence="1">Belongs to the universal ribosomal protein uL10 family.</text>
</comment>